<dbReference type="EC" id="6.2.1.54" evidence="1"/>
<dbReference type="EMBL" id="AE005672">
    <property type="protein sequence ID" value="AAK76230.1"/>
    <property type="molecule type" value="Genomic_DNA"/>
</dbReference>
<dbReference type="PIR" id="E95254">
    <property type="entry name" value="E95254"/>
</dbReference>
<dbReference type="RefSeq" id="WP_000066732.1">
    <property type="nucleotide sequence ID" value="NZ_CP155539.1"/>
</dbReference>
<dbReference type="SMR" id="P0A398"/>
<dbReference type="PaxDb" id="170187-SP_2176"/>
<dbReference type="EnsemblBacteria" id="AAK76230">
    <property type="protein sequence ID" value="AAK76230"/>
    <property type="gene ID" value="SP_2176"/>
</dbReference>
<dbReference type="KEGG" id="spn:SP_2176"/>
<dbReference type="eggNOG" id="COG1020">
    <property type="taxonomic scope" value="Bacteria"/>
</dbReference>
<dbReference type="PhylomeDB" id="P0A398"/>
<dbReference type="BioCyc" id="SPNE170187:G1FZB-2271-MONOMER"/>
<dbReference type="UniPathway" id="UPA00556"/>
<dbReference type="Proteomes" id="UP000000585">
    <property type="component" value="Chromosome"/>
</dbReference>
<dbReference type="GO" id="GO:0005737">
    <property type="term" value="C:cytoplasm"/>
    <property type="evidence" value="ECO:0007669"/>
    <property type="project" value="UniProtKB-SubCell"/>
</dbReference>
<dbReference type="GO" id="GO:0005524">
    <property type="term" value="F:ATP binding"/>
    <property type="evidence" value="ECO:0007669"/>
    <property type="project" value="UniProtKB-KW"/>
</dbReference>
<dbReference type="GO" id="GO:0047473">
    <property type="term" value="F:D-alanine [D-alanyl carrier protein] ligase activity"/>
    <property type="evidence" value="ECO:0007669"/>
    <property type="project" value="UniProtKB-UniRule"/>
</dbReference>
<dbReference type="GO" id="GO:0070395">
    <property type="term" value="P:lipoteichoic acid biosynthetic process"/>
    <property type="evidence" value="ECO:0007669"/>
    <property type="project" value="UniProtKB-UniRule"/>
</dbReference>
<dbReference type="CDD" id="cd05945">
    <property type="entry name" value="DltA"/>
    <property type="match status" value="1"/>
</dbReference>
<dbReference type="FunFam" id="3.30.300.30:FF:000012">
    <property type="entry name" value="D-alanine--D-alanyl carrier protein ligase"/>
    <property type="match status" value="1"/>
</dbReference>
<dbReference type="Gene3D" id="3.30.300.30">
    <property type="match status" value="1"/>
</dbReference>
<dbReference type="Gene3D" id="3.40.50.12780">
    <property type="entry name" value="N-terminal domain of ligase-like"/>
    <property type="match status" value="1"/>
</dbReference>
<dbReference type="HAMAP" id="MF_00593">
    <property type="entry name" value="DltA"/>
    <property type="match status" value="1"/>
</dbReference>
<dbReference type="InterPro" id="IPR010071">
    <property type="entry name" value="AA_adenyl_dom"/>
</dbReference>
<dbReference type="InterPro" id="IPR025110">
    <property type="entry name" value="AMP-bd_C"/>
</dbReference>
<dbReference type="InterPro" id="IPR045851">
    <property type="entry name" value="AMP-bd_C_sf"/>
</dbReference>
<dbReference type="InterPro" id="IPR020845">
    <property type="entry name" value="AMP-binding_CS"/>
</dbReference>
<dbReference type="InterPro" id="IPR000873">
    <property type="entry name" value="AMP-dep_synth/lig_dom"/>
</dbReference>
<dbReference type="InterPro" id="IPR042099">
    <property type="entry name" value="ANL_N_sf"/>
</dbReference>
<dbReference type="InterPro" id="IPR010072">
    <property type="entry name" value="DltA"/>
</dbReference>
<dbReference type="InterPro" id="IPR044507">
    <property type="entry name" value="DltA-like"/>
</dbReference>
<dbReference type="NCBIfam" id="TIGR01733">
    <property type="entry name" value="AA-adenyl-dom"/>
    <property type="match status" value="1"/>
</dbReference>
<dbReference type="NCBIfam" id="TIGR01734">
    <property type="entry name" value="D-ala-DACP-lig"/>
    <property type="match status" value="1"/>
</dbReference>
<dbReference type="NCBIfam" id="NF003417">
    <property type="entry name" value="PRK04813.1"/>
    <property type="match status" value="1"/>
</dbReference>
<dbReference type="PANTHER" id="PTHR45398">
    <property type="match status" value="1"/>
</dbReference>
<dbReference type="PANTHER" id="PTHR45398:SF1">
    <property type="entry name" value="ENZYME, PUTATIVE (JCVI)-RELATED"/>
    <property type="match status" value="1"/>
</dbReference>
<dbReference type="Pfam" id="PF00501">
    <property type="entry name" value="AMP-binding"/>
    <property type="match status" value="1"/>
</dbReference>
<dbReference type="Pfam" id="PF13193">
    <property type="entry name" value="AMP-binding_C"/>
    <property type="match status" value="1"/>
</dbReference>
<dbReference type="SUPFAM" id="SSF56801">
    <property type="entry name" value="Acetyl-CoA synthetase-like"/>
    <property type="match status" value="1"/>
</dbReference>
<dbReference type="PROSITE" id="PS00455">
    <property type="entry name" value="AMP_BINDING"/>
    <property type="match status" value="1"/>
</dbReference>
<organism>
    <name type="scientific">Streptococcus pneumoniae serotype 4 (strain ATCC BAA-334 / TIGR4)</name>
    <dbReference type="NCBI Taxonomy" id="170187"/>
    <lineage>
        <taxon>Bacteria</taxon>
        <taxon>Bacillati</taxon>
        <taxon>Bacillota</taxon>
        <taxon>Bacilli</taxon>
        <taxon>Lactobacillales</taxon>
        <taxon>Streptococcaceae</taxon>
        <taxon>Streptococcus</taxon>
    </lineage>
</organism>
<comment type="function">
    <text evidence="1">Catalyzes the first step in the D-alanylation of lipoteichoic acid (LTA), the activation of D-alanine and its transfer onto the D-alanyl carrier protein (Dcp) DltC. In an ATP-dependent two-step reaction, forms a high energy D-alanyl-AMP intermediate, followed by transfer of the D-alanyl residue as a thiol ester to the phosphopantheinyl prosthetic group of the Dcp. D-alanylation of LTA plays an important role in modulating the properties of the cell wall in Gram-positive bacteria, influencing the net charge of the cell wall.</text>
</comment>
<comment type="catalytic activity">
    <reaction evidence="1">
        <text>holo-[D-alanyl-carrier protein] + D-alanine + ATP = D-alanyl-[D-alanyl-carrier protein] + AMP + diphosphate</text>
        <dbReference type="Rhea" id="RHEA:55132"/>
        <dbReference type="Rhea" id="RHEA-COMP:14102"/>
        <dbReference type="Rhea" id="RHEA-COMP:14103"/>
        <dbReference type="ChEBI" id="CHEBI:30616"/>
        <dbReference type="ChEBI" id="CHEBI:33019"/>
        <dbReference type="ChEBI" id="CHEBI:57416"/>
        <dbReference type="ChEBI" id="CHEBI:64479"/>
        <dbReference type="ChEBI" id="CHEBI:138620"/>
        <dbReference type="ChEBI" id="CHEBI:456215"/>
        <dbReference type="EC" id="6.2.1.54"/>
    </reaction>
</comment>
<comment type="pathway">
    <text evidence="1">Cell wall biogenesis; lipoteichoic acid biosynthesis.</text>
</comment>
<comment type="subcellular location">
    <subcellularLocation>
        <location evidence="1">Cytoplasm</location>
    </subcellularLocation>
</comment>
<comment type="similarity">
    <text evidence="1">Belongs to the ATP-dependent AMP-binding enzyme family. DltA subfamily.</text>
</comment>
<reference key="1">
    <citation type="journal article" date="2001" name="Science">
        <title>Complete genome sequence of a virulent isolate of Streptococcus pneumoniae.</title>
        <authorList>
            <person name="Tettelin H."/>
            <person name="Nelson K.E."/>
            <person name="Paulsen I.T."/>
            <person name="Eisen J.A."/>
            <person name="Read T.D."/>
            <person name="Peterson S.N."/>
            <person name="Heidelberg J.F."/>
            <person name="DeBoy R.T."/>
            <person name="Haft D.H."/>
            <person name="Dodson R.J."/>
            <person name="Durkin A.S."/>
            <person name="Gwinn M.L."/>
            <person name="Kolonay J.F."/>
            <person name="Nelson W.C."/>
            <person name="Peterson J.D."/>
            <person name="Umayam L.A."/>
            <person name="White O."/>
            <person name="Salzberg S.L."/>
            <person name="Lewis M.R."/>
            <person name="Radune D."/>
            <person name="Holtzapple E.K."/>
            <person name="Khouri H.M."/>
            <person name="Wolf A.M."/>
            <person name="Utterback T.R."/>
            <person name="Hansen C.L."/>
            <person name="McDonald L.A."/>
            <person name="Feldblyum T.V."/>
            <person name="Angiuoli S.V."/>
            <person name="Dickinson T."/>
            <person name="Hickey E.K."/>
            <person name="Holt I.E."/>
            <person name="Loftus B.J."/>
            <person name="Yang F."/>
            <person name="Smith H.O."/>
            <person name="Venter J.C."/>
            <person name="Dougherty B.A."/>
            <person name="Morrison D.A."/>
            <person name="Hollingshead S.K."/>
            <person name="Fraser C.M."/>
        </authorList>
    </citation>
    <scope>NUCLEOTIDE SEQUENCE [LARGE SCALE GENOMIC DNA]</scope>
    <source>
        <strain>ATCC BAA-334 / TIGR4</strain>
    </source>
</reference>
<accession>P0A398</accession>
<accession>Q97N82</accession>
<keyword id="KW-0067">ATP-binding</keyword>
<keyword id="KW-0963">Cytoplasm</keyword>
<keyword id="KW-0436">Ligase</keyword>
<keyword id="KW-0547">Nucleotide-binding</keyword>
<keyword id="KW-1185">Reference proteome</keyword>
<gene>
    <name evidence="1" type="primary">dltA</name>
    <name type="ordered locus">SP_2176</name>
</gene>
<evidence type="ECO:0000255" key="1">
    <source>
        <dbReference type="HAMAP-Rule" id="MF_00593"/>
    </source>
</evidence>
<proteinExistence type="inferred from homology"/>
<name>DLTA_STRPN</name>
<feature type="chain" id="PRO_0000213163" description="D-alanine--D-alanyl carrier protein ligase">
    <location>
        <begin position="1"/>
        <end position="516"/>
    </location>
</feature>
<feature type="binding site" evidence="1">
    <location>
        <begin position="156"/>
        <end position="157"/>
    </location>
    <ligand>
        <name>ATP</name>
        <dbReference type="ChEBI" id="CHEBI:30616"/>
    </ligand>
</feature>
<feature type="binding site" evidence="1">
    <location>
        <position position="203"/>
    </location>
    <ligand>
        <name>D-alanine</name>
        <dbReference type="ChEBI" id="CHEBI:57416"/>
    </ligand>
</feature>
<feature type="binding site" evidence="1">
    <location>
        <begin position="298"/>
        <end position="303"/>
    </location>
    <ligand>
        <name>ATP</name>
        <dbReference type="ChEBI" id="CHEBI:30616"/>
    </ligand>
</feature>
<feature type="binding site" evidence="1">
    <location>
        <position position="307"/>
    </location>
    <ligand>
        <name>D-alanine</name>
        <dbReference type="ChEBI" id="CHEBI:57416"/>
    </ligand>
</feature>
<feature type="binding site" evidence="1">
    <location>
        <position position="389"/>
    </location>
    <ligand>
        <name>ATP</name>
        <dbReference type="ChEBI" id="CHEBI:30616"/>
    </ligand>
</feature>
<feature type="binding site" evidence="1">
    <location>
        <begin position="401"/>
        <end position="404"/>
    </location>
    <ligand>
        <name>ATP</name>
        <dbReference type="ChEBI" id="CHEBI:30616"/>
    </ligand>
</feature>
<feature type="binding site" evidence="1">
    <location>
        <position position="503"/>
    </location>
    <ligand>
        <name>ATP</name>
        <dbReference type="ChEBI" id="CHEBI:30616"/>
    </ligand>
</feature>
<feature type="binding site" evidence="1">
    <location>
        <position position="503"/>
    </location>
    <ligand>
        <name>D-alanine</name>
        <dbReference type="ChEBI" id="CHEBI:57416"/>
    </ligand>
</feature>
<sequence>MSNKPIADMIETIEHFAQTQPSYPVYNVLGQEHTYGDLKADSDSLAAVIDQLGLPEKSPVVVFGGQEYEMLATFVALTKSGHAYIPIDSHSALERVSAILEVAEPSLIIAISAFPLEQVSTPMINLAQVQEAFAQGNNYEITHPVKGDDNYYIIFTSGTTGKPKGVQISHDNLLSFTNWMITDKEFATPSRPQMLAQPPYSFDLSVMYWAPTLALGGTLFTLPSVITQDFKQLFAAIFSLPIAIWTSTPSFADMAMLSEYFNSEKMPGITHFYFDGEELTVKTAQKLRERFPNARIINAYGPTEATVALSAVAVTDEMLATLKRLPIGYTKADSPTFIIDEEGNKLPNGEQGEIIVSGPAVSKGYMNNPEKTAEAFFEFEDLPAYHTGDVGTMTDEGLLLYGGRMDFQIKFNGYRIELEDVSQNLNKSRFIESAVAVPRYNKDHKVQNLLAYVILKDGVREQFERDIDITKAIKEDLTDIMMSYMMPSKFLYRDSLPLTPNGKIDIKGLINEVNKR</sequence>
<protein>
    <recommendedName>
        <fullName evidence="1">D-alanine--D-alanyl carrier protein ligase</fullName>
        <shortName evidence="1">DCL</shortName>
        <ecNumber evidence="1">6.2.1.54</ecNumber>
    </recommendedName>
    <alternativeName>
        <fullName evidence="1">D-alanine--poly(phosphoribitol) ligase subunit 1</fullName>
    </alternativeName>
    <alternativeName>
        <fullName evidence="1">D-alanine-activating enzyme</fullName>
        <shortName evidence="1">DAE</shortName>
    </alternativeName>
</protein>